<sequence length="570" mass="61011">MPARISRATYAQMFGPTVGDKVRLADTDLIIEVERDLTTYGEEVKFGGGKVIRDGMGQSQLSRAEGAMDTVITNALILDHSGIYKADIGLLDGRIALIGKAGNPDTQPGISIIIGPGTEIIAGEGKIVTAGGIDTHVHFISPQQVDEALNAGITCMVGGGTGPAHGTLATTCTPGPWHIARLIQSFDGLPMNIGVFGKGNASLPGALEEMVRAGACGLKLHEDWGCTPAAIDNCLSVADHFDVQVAIHTDTLNEGGFVEDTLNAFKGRTIHSFHTEGAGGGHAPDIIRVCQYPNVLPASTNPTRPYTVNTIAEHLDMLMVCHHLSPAIPEDIAFAESRIRKETIAAEDILHDMGAFSIISSDSQAMGRVGEMIIRCWQTADKMKKQRGSLPDDRPGNDNYRARRYIAKYTINPAIAHGMAHEIGSVEVGKRADLVLWNPAFFGVKPDMVLLGGWIATAPMGDANGSIPTPQPMHTRPMFGSFGKALTNTSITFVSQAAMDEGLREKIGVDKQLVAVVNTRGGIGKHSMILNNAMPQMEVDPETYEVRADGELLTCEPVDVVPMAQRYFLF</sequence>
<keyword id="KW-0963">Cytoplasm</keyword>
<keyword id="KW-0378">Hydrolase</keyword>
<keyword id="KW-0479">Metal-binding</keyword>
<keyword id="KW-0533">Nickel</keyword>
<evidence type="ECO:0000255" key="1">
    <source>
        <dbReference type="HAMAP-Rule" id="MF_01953"/>
    </source>
</evidence>
<name>URE11_BRUAB</name>
<accession>Q93T81</accession>
<accession>Q57F85</accession>
<proteinExistence type="inferred from homology"/>
<gene>
    <name evidence="1" type="primary">ureC1</name>
    <name type="ordered locus">BruAb1_0296</name>
</gene>
<organism>
    <name type="scientific">Brucella abortus biovar 1 (strain 9-941)</name>
    <dbReference type="NCBI Taxonomy" id="262698"/>
    <lineage>
        <taxon>Bacteria</taxon>
        <taxon>Pseudomonadati</taxon>
        <taxon>Pseudomonadota</taxon>
        <taxon>Alphaproteobacteria</taxon>
        <taxon>Hyphomicrobiales</taxon>
        <taxon>Brucellaceae</taxon>
        <taxon>Brucella/Ochrobactrum group</taxon>
        <taxon>Brucella</taxon>
    </lineage>
</organism>
<feature type="chain" id="PRO_0000234139" description="Urease subunit alpha 1">
    <location>
        <begin position="1"/>
        <end position="570"/>
    </location>
</feature>
<feature type="domain" description="Urease" evidence="1">
    <location>
        <begin position="131"/>
        <end position="570"/>
    </location>
</feature>
<feature type="active site" description="Proton donor" evidence="1">
    <location>
        <position position="322"/>
    </location>
</feature>
<feature type="binding site" evidence="1">
    <location>
        <position position="136"/>
    </location>
    <ligand>
        <name>Ni(2+)</name>
        <dbReference type="ChEBI" id="CHEBI:49786"/>
        <label>1</label>
    </ligand>
</feature>
<feature type="binding site" evidence="1">
    <location>
        <position position="138"/>
    </location>
    <ligand>
        <name>Ni(2+)</name>
        <dbReference type="ChEBI" id="CHEBI:49786"/>
        <label>1</label>
    </ligand>
</feature>
<feature type="binding site" description="via carbamate group" evidence="1">
    <location>
        <position position="219"/>
    </location>
    <ligand>
        <name>Ni(2+)</name>
        <dbReference type="ChEBI" id="CHEBI:49786"/>
        <label>1</label>
    </ligand>
</feature>
<feature type="binding site" description="via carbamate group" evidence="1">
    <location>
        <position position="219"/>
    </location>
    <ligand>
        <name>Ni(2+)</name>
        <dbReference type="ChEBI" id="CHEBI:49786"/>
        <label>2</label>
    </ligand>
</feature>
<feature type="binding site" evidence="1">
    <location>
        <position position="221"/>
    </location>
    <ligand>
        <name>substrate</name>
    </ligand>
</feature>
<feature type="binding site" evidence="1">
    <location>
        <position position="248"/>
    </location>
    <ligand>
        <name>Ni(2+)</name>
        <dbReference type="ChEBI" id="CHEBI:49786"/>
        <label>2</label>
    </ligand>
</feature>
<feature type="binding site" evidence="1">
    <location>
        <position position="274"/>
    </location>
    <ligand>
        <name>Ni(2+)</name>
        <dbReference type="ChEBI" id="CHEBI:49786"/>
        <label>2</label>
    </ligand>
</feature>
<feature type="binding site" evidence="1">
    <location>
        <position position="362"/>
    </location>
    <ligand>
        <name>Ni(2+)</name>
        <dbReference type="ChEBI" id="CHEBI:49786"/>
        <label>1</label>
    </ligand>
</feature>
<feature type="modified residue" description="N6-carboxylysine" evidence="1">
    <location>
        <position position="219"/>
    </location>
</feature>
<reference key="1">
    <citation type="journal article" date="2005" name="J. Bacteriol.">
        <title>Completion of the genome sequence of Brucella abortus and comparison to the highly similar genomes of Brucella melitensis and Brucella suis.</title>
        <authorList>
            <person name="Halling S.M."/>
            <person name="Peterson-Burch B.D."/>
            <person name="Bricker B.J."/>
            <person name="Zuerner R.L."/>
            <person name="Qing Z."/>
            <person name="Li L.-L."/>
            <person name="Kapur V."/>
            <person name="Alt D.P."/>
            <person name="Olsen S.C."/>
        </authorList>
    </citation>
    <scope>NUCLEOTIDE SEQUENCE [LARGE SCALE GENOMIC DNA]</scope>
    <source>
        <strain>9-941</strain>
    </source>
</reference>
<comment type="catalytic activity">
    <reaction evidence="1">
        <text>urea + 2 H2O + H(+) = hydrogencarbonate + 2 NH4(+)</text>
        <dbReference type="Rhea" id="RHEA:20557"/>
        <dbReference type="ChEBI" id="CHEBI:15377"/>
        <dbReference type="ChEBI" id="CHEBI:15378"/>
        <dbReference type="ChEBI" id="CHEBI:16199"/>
        <dbReference type="ChEBI" id="CHEBI:17544"/>
        <dbReference type="ChEBI" id="CHEBI:28938"/>
        <dbReference type="EC" id="3.5.1.5"/>
    </reaction>
</comment>
<comment type="cofactor">
    <cofactor evidence="1">
        <name>Ni cation</name>
        <dbReference type="ChEBI" id="CHEBI:25516"/>
    </cofactor>
    <text evidence="1">Binds 2 nickel ions per subunit.</text>
</comment>
<comment type="pathway">
    <text evidence="1">Nitrogen metabolism; urea degradation; CO(2) and NH(3) from urea (urease route): step 1/1.</text>
</comment>
<comment type="subunit">
    <text evidence="1">Heterotrimer of UreA (gamma), UreB (beta) and UreC (alpha) subunits. Three heterotrimers associate to form the active enzyme.</text>
</comment>
<comment type="subcellular location">
    <subcellularLocation>
        <location evidence="1">Cytoplasm</location>
    </subcellularLocation>
</comment>
<comment type="PTM">
    <text evidence="1">Carboxylation allows a single lysine to coordinate two nickel ions.</text>
</comment>
<comment type="similarity">
    <text evidence="1">Belongs to the metallo-dependent hydrolases superfamily. Urease alpha subunit family.</text>
</comment>
<dbReference type="EC" id="3.5.1.5" evidence="1"/>
<dbReference type="EMBL" id="AE017223">
    <property type="protein sequence ID" value="AAX73699.1"/>
    <property type="molecule type" value="Genomic_DNA"/>
</dbReference>
<dbReference type="SMR" id="Q93T81"/>
<dbReference type="EnsemblBacteria" id="AAX73699">
    <property type="protein sequence ID" value="AAX73699"/>
    <property type="gene ID" value="BruAb1_0296"/>
</dbReference>
<dbReference type="KEGG" id="bmb:BruAb1_0296"/>
<dbReference type="HOGENOM" id="CLU_000980_0_0_5"/>
<dbReference type="UniPathway" id="UPA00258">
    <property type="reaction ID" value="UER00370"/>
</dbReference>
<dbReference type="Proteomes" id="UP000000540">
    <property type="component" value="Chromosome I"/>
</dbReference>
<dbReference type="GO" id="GO:0005737">
    <property type="term" value="C:cytoplasm"/>
    <property type="evidence" value="ECO:0007669"/>
    <property type="project" value="UniProtKB-SubCell"/>
</dbReference>
<dbReference type="GO" id="GO:0016151">
    <property type="term" value="F:nickel cation binding"/>
    <property type="evidence" value="ECO:0007669"/>
    <property type="project" value="UniProtKB-UniRule"/>
</dbReference>
<dbReference type="GO" id="GO:0009039">
    <property type="term" value="F:urease activity"/>
    <property type="evidence" value="ECO:0007669"/>
    <property type="project" value="UniProtKB-UniRule"/>
</dbReference>
<dbReference type="GO" id="GO:0043419">
    <property type="term" value="P:urea catabolic process"/>
    <property type="evidence" value="ECO:0007669"/>
    <property type="project" value="UniProtKB-UniRule"/>
</dbReference>
<dbReference type="CDD" id="cd00375">
    <property type="entry name" value="Urease_alpha"/>
    <property type="match status" value="1"/>
</dbReference>
<dbReference type="Gene3D" id="3.20.20.140">
    <property type="entry name" value="Metal-dependent hydrolases"/>
    <property type="match status" value="1"/>
</dbReference>
<dbReference type="Gene3D" id="2.30.40.10">
    <property type="entry name" value="Urease, subunit C, domain 1"/>
    <property type="match status" value="1"/>
</dbReference>
<dbReference type="HAMAP" id="MF_01953">
    <property type="entry name" value="Urease_alpha"/>
    <property type="match status" value="1"/>
</dbReference>
<dbReference type="InterPro" id="IPR006680">
    <property type="entry name" value="Amidohydro-rel"/>
</dbReference>
<dbReference type="InterPro" id="IPR011059">
    <property type="entry name" value="Metal-dep_hydrolase_composite"/>
</dbReference>
<dbReference type="InterPro" id="IPR032466">
    <property type="entry name" value="Metal_Hydrolase"/>
</dbReference>
<dbReference type="InterPro" id="IPR011612">
    <property type="entry name" value="Urease_alpha_N_dom"/>
</dbReference>
<dbReference type="InterPro" id="IPR050112">
    <property type="entry name" value="Urease_alpha_subunit"/>
</dbReference>
<dbReference type="InterPro" id="IPR017950">
    <property type="entry name" value="Urease_AS"/>
</dbReference>
<dbReference type="InterPro" id="IPR005848">
    <property type="entry name" value="Urease_asu"/>
</dbReference>
<dbReference type="InterPro" id="IPR017951">
    <property type="entry name" value="Urease_asu_c"/>
</dbReference>
<dbReference type="InterPro" id="IPR029754">
    <property type="entry name" value="Urease_Ni-bd"/>
</dbReference>
<dbReference type="NCBIfam" id="NF009685">
    <property type="entry name" value="PRK13206.1"/>
    <property type="match status" value="1"/>
</dbReference>
<dbReference type="NCBIfam" id="NF009686">
    <property type="entry name" value="PRK13207.1"/>
    <property type="match status" value="1"/>
</dbReference>
<dbReference type="NCBIfam" id="TIGR01792">
    <property type="entry name" value="urease_alph"/>
    <property type="match status" value="1"/>
</dbReference>
<dbReference type="PANTHER" id="PTHR43440">
    <property type="entry name" value="UREASE"/>
    <property type="match status" value="1"/>
</dbReference>
<dbReference type="PANTHER" id="PTHR43440:SF1">
    <property type="entry name" value="UREASE"/>
    <property type="match status" value="1"/>
</dbReference>
<dbReference type="Pfam" id="PF01979">
    <property type="entry name" value="Amidohydro_1"/>
    <property type="match status" value="1"/>
</dbReference>
<dbReference type="Pfam" id="PF00449">
    <property type="entry name" value="Urease_alpha"/>
    <property type="match status" value="1"/>
</dbReference>
<dbReference type="PRINTS" id="PR01752">
    <property type="entry name" value="UREASE"/>
</dbReference>
<dbReference type="SUPFAM" id="SSF51338">
    <property type="entry name" value="Composite domain of metallo-dependent hydrolases"/>
    <property type="match status" value="2"/>
</dbReference>
<dbReference type="SUPFAM" id="SSF51556">
    <property type="entry name" value="Metallo-dependent hydrolases"/>
    <property type="match status" value="1"/>
</dbReference>
<dbReference type="PROSITE" id="PS01120">
    <property type="entry name" value="UREASE_1"/>
    <property type="match status" value="1"/>
</dbReference>
<dbReference type="PROSITE" id="PS00145">
    <property type="entry name" value="UREASE_2"/>
    <property type="match status" value="1"/>
</dbReference>
<dbReference type="PROSITE" id="PS51368">
    <property type="entry name" value="UREASE_3"/>
    <property type="match status" value="1"/>
</dbReference>
<protein>
    <recommendedName>
        <fullName evidence="1">Urease subunit alpha 1</fullName>
        <ecNumber evidence="1">3.5.1.5</ecNumber>
    </recommendedName>
    <alternativeName>
        <fullName evidence="1">Urea amidohydrolase subunit alpha 1</fullName>
    </alternativeName>
</protein>